<accession>Q8S8W4</accession>
<geneLocation type="chloroplast"/>
<keyword id="KW-0150">Chloroplast</keyword>
<keyword id="KW-0249">Electron transport</keyword>
<keyword id="KW-0349">Heme</keyword>
<keyword id="KW-0408">Iron</keyword>
<keyword id="KW-0472">Membrane</keyword>
<keyword id="KW-0479">Metal-binding</keyword>
<keyword id="KW-0602">Photosynthesis</keyword>
<keyword id="KW-0934">Plastid</keyword>
<keyword id="KW-0732">Signal</keyword>
<keyword id="KW-0793">Thylakoid</keyword>
<keyword id="KW-0812">Transmembrane</keyword>
<keyword id="KW-1133">Transmembrane helix</keyword>
<keyword id="KW-0813">Transport</keyword>
<organism>
    <name type="scientific">Atropa belladonna</name>
    <name type="common">Belladonna</name>
    <name type="synonym">Deadly nightshade</name>
    <dbReference type="NCBI Taxonomy" id="33113"/>
    <lineage>
        <taxon>Eukaryota</taxon>
        <taxon>Viridiplantae</taxon>
        <taxon>Streptophyta</taxon>
        <taxon>Embryophyta</taxon>
        <taxon>Tracheophyta</taxon>
        <taxon>Spermatophyta</taxon>
        <taxon>Magnoliopsida</taxon>
        <taxon>eudicotyledons</taxon>
        <taxon>Gunneridae</taxon>
        <taxon>Pentapetalae</taxon>
        <taxon>asterids</taxon>
        <taxon>lamiids</taxon>
        <taxon>Solanales</taxon>
        <taxon>Solanaceae</taxon>
        <taxon>Solanoideae</taxon>
        <taxon>Hyoscyameae</taxon>
        <taxon>Atropa</taxon>
    </lineage>
</organism>
<protein>
    <recommendedName>
        <fullName evidence="2">Cytochrome f</fullName>
    </recommendedName>
</protein>
<sequence length="320" mass="35222">MQTRNAFSWLKKQITRSISVSLMIYILTRTSISSAYPIFAQQGYENPREATGRIVCANCHLANKPVEIEVPQAVLPDTVFEAVVRIPYDMQLKQVLANGKKGGLNVGAVLILPEGFELAPSDRISPEMKEKIGNLSFQSYRPNKKNILVIGPVPGKKYSEITFPILSPDPATKKDVHFLKYPIYVGGNRGRGQIYPDGSKSNNTVYNATAAGIVSKIIRKEKGGYEITITDASEGRQVVDIIPPGPELLVSEGESIKFDQPLTSNPNVGGFGQGDAEIVLQDPLRVQGLLFFLASVILAQIFLVLKKKQFEKVQLAEMNF</sequence>
<reference key="1">
    <citation type="journal article" date="2002" name="Mol. Biol. Evol.">
        <title>The plastid chromosome of Atropa belladonna and its comparison with that of Nicotiana tabacum: the role of RNA editing in generating divergence in the process of plant speciation.</title>
        <authorList>
            <person name="Schmitz-Linneweber C."/>
            <person name="Regel R."/>
            <person name="Du T.G."/>
            <person name="Hupfer H."/>
            <person name="Herrmann R.G."/>
            <person name="Maier R.M."/>
        </authorList>
    </citation>
    <scope>NUCLEOTIDE SEQUENCE [LARGE SCALE GENOMIC DNA]</scope>
    <source>
        <strain>cv. Ab5p(kan)</strain>
    </source>
</reference>
<evidence type="ECO:0000250" key="1"/>
<evidence type="ECO:0000255" key="2">
    <source>
        <dbReference type="HAMAP-Rule" id="MF_00610"/>
    </source>
</evidence>
<name>CYF_ATRBE</name>
<proteinExistence type="inferred from homology"/>
<dbReference type="EMBL" id="AJ316582">
    <property type="protein sequence ID" value="CAC88057.1"/>
    <property type="molecule type" value="Genomic_DNA"/>
</dbReference>
<dbReference type="RefSeq" id="NP_783245.1">
    <property type="nucleotide sequence ID" value="NC_004561.1"/>
</dbReference>
<dbReference type="SMR" id="Q8S8W4"/>
<dbReference type="GeneID" id="806471"/>
<dbReference type="GO" id="GO:0009535">
    <property type="term" value="C:chloroplast thylakoid membrane"/>
    <property type="evidence" value="ECO:0007669"/>
    <property type="project" value="UniProtKB-SubCell"/>
</dbReference>
<dbReference type="GO" id="GO:0009055">
    <property type="term" value="F:electron transfer activity"/>
    <property type="evidence" value="ECO:0007669"/>
    <property type="project" value="UniProtKB-UniRule"/>
</dbReference>
<dbReference type="GO" id="GO:0020037">
    <property type="term" value="F:heme binding"/>
    <property type="evidence" value="ECO:0007669"/>
    <property type="project" value="InterPro"/>
</dbReference>
<dbReference type="GO" id="GO:0005506">
    <property type="term" value="F:iron ion binding"/>
    <property type="evidence" value="ECO:0007669"/>
    <property type="project" value="InterPro"/>
</dbReference>
<dbReference type="GO" id="GO:0015979">
    <property type="term" value="P:photosynthesis"/>
    <property type="evidence" value="ECO:0007669"/>
    <property type="project" value="UniProtKB-UniRule"/>
</dbReference>
<dbReference type="FunFam" id="1.20.5.700:FF:000001">
    <property type="entry name" value="Cytochrome f"/>
    <property type="match status" value="1"/>
</dbReference>
<dbReference type="FunFam" id="2.40.50.100:FF:000007">
    <property type="entry name" value="Cytochrome f"/>
    <property type="match status" value="1"/>
</dbReference>
<dbReference type="FunFam" id="2.60.40.830:FF:000001">
    <property type="entry name" value="Cytochrome f"/>
    <property type="match status" value="1"/>
</dbReference>
<dbReference type="Gene3D" id="2.40.50.100">
    <property type="match status" value="1"/>
</dbReference>
<dbReference type="Gene3D" id="2.60.40.830">
    <property type="entry name" value="Cytochrome f large domain"/>
    <property type="match status" value="1"/>
</dbReference>
<dbReference type="Gene3D" id="1.20.5.700">
    <property type="entry name" value="Single helix bin"/>
    <property type="match status" value="1"/>
</dbReference>
<dbReference type="HAMAP" id="MF_00610">
    <property type="entry name" value="Cytb6_f_cytF"/>
    <property type="match status" value="1"/>
</dbReference>
<dbReference type="InterPro" id="IPR024058">
    <property type="entry name" value="Cyt-f_TM"/>
</dbReference>
<dbReference type="InterPro" id="IPR002325">
    <property type="entry name" value="Cyt_f"/>
</dbReference>
<dbReference type="InterPro" id="IPR024094">
    <property type="entry name" value="Cyt_f_lg_dom"/>
</dbReference>
<dbReference type="InterPro" id="IPR036826">
    <property type="entry name" value="Cyt_f_lg_dom_sf"/>
</dbReference>
<dbReference type="InterPro" id="IPR011054">
    <property type="entry name" value="Rudment_hybrid_motif"/>
</dbReference>
<dbReference type="PANTHER" id="PTHR33288">
    <property type="match status" value="1"/>
</dbReference>
<dbReference type="PANTHER" id="PTHR33288:SF10">
    <property type="entry name" value="CYTOCHROME F"/>
    <property type="match status" value="1"/>
</dbReference>
<dbReference type="Pfam" id="PF01333">
    <property type="entry name" value="Apocytochr_F_C"/>
    <property type="match status" value="1"/>
</dbReference>
<dbReference type="Pfam" id="PF16639">
    <property type="entry name" value="Apocytochr_F_N"/>
    <property type="match status" value="1"/>
</dbReference>
<dbReference type="PRINTS" id="PR00610">
    <property type="entry name" value="CYTOCHROMEF"/>
</dbReference>
<dbReference type="SUPFAM" id="SSF103431">
    <property type="entry name" value="Cytochrome f subunit of the cytochrome b6f complex, transmembrane anchor"/>
    <property type="match status" value="1"/>
</dbReference>
<dbReference type="SUPFAM" id="SSF49441">
    <property type="entry name" value="Cytochrome f, large domain"/>
    <property type="match status" value="1"/>
</dbReference>
<dbReference type="SUPFAM" id="SSF51246">
    <property type="entry name" value="Rudiment single hybrid motif"/>
    <property type="match status" value="1"/>
</dbReference>
<dbReference type="PROSITE" id="PS51010">
    <property type="entry name" value="CYTF"/>
    <property type="match status" value="1"/>
</dbReference>
<comment type="function">
    <text evidence="2">Component of the cytochrome b6-f complex, which mediates electron transfer between photosystem II (PSII) and photosystem I (PSI), cyclic electron flow around PSI, and state transitions.</text>
</comment>
<comment type="cofactor">
    <cofactor evidence="2">
        <name>heme</name>
        <dbReference type="ChEBI" id="CHEBI:30413"/>
    </cofactor>
    <text evidence="2">Binds 1 heme group covalently.</text>
</comment>
<comment type="subunit">
    <text evidence="1">The 4 large subunits of the cytochrome b6-f complex are cytochrome b6, subunit IV (17 kDa polypeptide, petD), cytochrome f and the Rieske protein, while the 4 small subunits are PetG, PetL, PetM and PetN. The complex functions as a dimer (By similarity).</text>
</comment>
<comment type="subcellular location">
    <subcellularLocation>
        <location evidence="2">Plastid</location>
        <location evidence="2">Chloroplast thylakoid membrane</location>
        <topology evidence="2">Single-pass membrane protein</topology>
    </subcellularLocation>
</comment>
<comment type="similarity">
    <text evidence="2">Belongs to the cytochrome f family.</text>
</comment>
<gene>
    <name evidence="2" type="primary">petA</name>
</gene>
<feature type="signal peptide" evidence="2">
    <location>
        <begin position="1"/>
        <end position="35"/>
    </location>
</feature>
<feature type="chain" id="PRO_0000023805" description="Cytochrome f">
    <location>
        <begin position="36"/>
        <end position="320"/>
    </location>
</feature>
<feature type="transmembrane region" description="Helical" evidence="2">
    <location>
        <begin position="286"/>
        <end position="305"/>
    </location>
</feature>
<feature type="binding site" description="axial binding residue" evidence="2">
    <location>
        <position position="36"/>
    </location>
    <ligand>
        <name>heme</name>
        <dbReference type="ChEBI" id="CHEBI:30413"/>
    </ligand>
    <ligandPart>
        <name>Fe</name>
        <dbReference type="ChEBI" id="CHEBI:18248"/>
    </ligandPart>
</feature>
<feature type="binding site" description="covalent" evidence="2">
    <location>
        <position position="56"/>
    </location>
    <ligand>
        <name>heme</name>
        <dbReference type="ChEBI" id="CHEBI:30413"/>
    </ligand>
</feature>
<feature type="binding site" description="covalent" evidence="2">
    <location>
        <position position="59"/>
    </location>
    <ligand>
        <name>heme</name>
        <dbReference type="ChEBI" id="CHEBI:30413"/>
    </ligand>
</feature>
<feature type="binding site" description="axial binding residue" evidence="2">
    <location>
        <position position="60"/>
    </location>
    <ligand>
        <name>heme</name>
        <dbReference type="ChEBI" id="CHEBI:30413"/>
    </ligand>
    <ligandPart>
        <name>Fe</name>
        <dbReference type="ChEBI" id="CHEBI:18248"/>
    </ligandPart>
</feature>